<dbReference type="EMBL" id="AF136539">
    <property type="protein sequence ID" value="AAD33716.1"/>
    <property type="molecule type" value="mRNA"/>
</dbReference>
<dbReference type="EMBL" id="AC006932">
    <property type="protein sequence ID" value="AAF22893.1"/>
    <property type="status" value="ALT_SEQ"/>
    <property type="molecule type" value="Genomic_DNA"/>
</dbReference>
<dbReference type="EMBL" id="CP002684">
    <property type="protein sequence ID" value="AEE28295.1"/>
    <property type="molecule type" value="Genomic_DNA"/>
</dbReference>
<dbReference type="RefSeq" id="NP_001077490.1">
    <property type="nucleotide sequence ID" value="NM_001084021.2"/>
</dbReference>
<dbReference type="SMR" id="Q9XFB0"/>
<dbReference type="BioGRID" id="527043">
    <property type="interactions" value="4"/>
</dbReference>
<dbReference type="FunCoup" id="Q9XFB0">
    <property type="interactions" value="70"/>
</dbReference>
<dbReference type="IntAct" id="Q9XFB0">
    <property type="interactions" value="3"/>
</dbReference>
<dbReference type="STRING" id="3702.Q9XFB0"/>
<dbReference type="iPTMnet" id="Q9XFB0"/>
<dbReference type="PaxDb" id="3702-AT1G08465.1"/>
<dbReference type="ProteomicsDB" id="242858"/>
<dbReference type="EnsemblPlants" id="AT1G08465.1">
    <property type="protein sequence ID" value="AT1G08465.1"/>
    <property type="gene ID" value="AT1G08465"/>
</dbReference>
<dbReference type="GeneID" id="3766682"/>
<dbReference type="Gramene" id="AT1G08465.1">
    <property type="protein sequence ID" value="AT1G08465.1"/>
    <property type="gene ID" value="AT1G08465"/>
</dbReference>
<dbReference type="KEGG" id="ath:AT1G08465"/>
<dbReference type="Araport" id="AT1G08465"/>
<dbReference type="TAIR" id="AT1G08465">
    <property type="gene designation" value="YAB2"/>
</dbReference>
<dbReference type="eggNOG" id="ENOG502R9GD">
    <property type="taxonomic scope" value="Eukaryota"/>
</dbReference>
<dbReference type="HOGENOM" id="CLU_071156_0_1_1"/>
<dbReference type="InParanoid" id="Q9XFB0"/>
<dbReference type="OMA" id="TRKDCAS"/>
<dbReference type="OrthoDB" id="667577at2759"/>
<dbReference type="PhylomeDB" id="Q9XFB0"/>
<dbReference type="PRO" id="PR:Q9XFB0"/>
<dbReference type="Proteomes" id="UP000006548">
    <property type="component" value="Chromosome 1"/>
</dbReference>
<dbReference type="ExpressionAtlas" id="Q9XFB0">
    <property type="expression patterns" value="baseline and differential"/>
</dbReference>
<dbReference type="GO" id="GO:0005634">
    <property type="term" value="C:nucleus"/>
    <property type="evidence" value="ECO:0007669"/>
    <property type="project" value="UniProtKB-SubCell"/>
</dbReference>
<dbReference type="GO" id="GO:0003700">
    <property type="term" value="F:DNA-binding transcription factor activity"/>
    <property type="evidence" value="ECO:0000250"/>
    <property type="project" value="TAIR"/>
</dbReference>
<dbReference type="GO" id="GO:0000976">
    <property type="term" value="F:transcription cis-regulatory region binding"/>
    <property type="evidence" value="ECO:0000353"/>
    <property type="project" value="TAIR"/>
</dbReference>
<dbReference type="GO" id="GO:0008270">
    <property type="term" value="F:zinc ion binding"/>
    <property type="evidence" value="ECO:0007669"/>
    <property type="project" value="UniProtKB-KW"/>
</dbReference>
<dbReference type="GO" id="GO:0010158">
    <property type="term" value="P:abaxial cell fate specification"/>
    <property type="evidence" value="ECO:0000314"/>
    <property type="project" value="TAIR"/>
</dbReference>
<dbReference type="CDD" id="cd00084">
    <property type="entry name" value="HMG-box_SF"/>
    <property type="match status" value="1"/>
</dbReference>
<dbReference type="FunFam" id="1.10.30.10:FF:000047">
    <property type="entry name" value="Axial regulator YABBY"/>
    <property type="match status" value="1"/>
</dbReference>
<dbReference type="Gene3D" id="1.10.30.10">
    <property type="entry name" value="High mobility group box domain"/>
    <property type="match status" value="1"/>
</dbReference>
<dbReference type="InterPro" id="IPR036910">
    <property type="entry name" value="HMG_box_dom_sf"/>
</dbReference>
<dbReference type="InterPro" id="IPR006780">
    <property type="entry name" value="YABBY"/>
</dbReference>
<dbReference type="InterPro" id="IPR056775">
    <property type="entry name" value="YABBY_C"/>
</dbReference>
<dbReference type="InterPro" id="IPR056776">
    <property type="entry name" value="YABBY_N"/>
</dbReference>
<dbReference type="PANTHER" id="PTHR31675:SF30">
    <property type="entry name" value="AXIAL REGULATOR YABBY 2-RELATED"/>
    <property type="match status" value="1"/>
</dbReference>
<dbReference type="PANTHER" id="PTHR31675">
    <property type="entry name" value="PROTEIN YABBY 6-RELATED"/>
    <property type="match status" value="1"/>
</dbReference>
<dbReference type="Pfam" id="PF04690">
    <property type="entry name" value="YABBY"/>
    <property type="match status" value="1"/>
</dbReference>
<dbReference type="Pfam" id="PF24868">
    <property type="entry name" value="YABBY_N"/>
    <property type="match status" value="1"/>
</dbReference>
<dbReference type="SUPFAM" id="SSF47095">
    <property type="entry name" value="HMG-box"/>
    <property type="match status" value="1"/>
</dbReference>
<name>YAB2_ARATH</name>
<reference key="1">
    <citation type="journal article" date="1999" name="Development">
        <title>Members of the YABBY gene family specify abaxial cell fate in Arabidopsis.</title>
        <authorList>
            <person name="Siegfried K.R."/>
            <person name="Eshed Y."/>
            <person name="Baum S.F."/>
            <person name="Otsuga D."/>
            <person name="Drews G.N."/>
            <person name="Bowman J.L."/>
        </authorList>
    </citation>
    <scope>NUCLEOTIDE SEQUENCE [MRNA]</scope>
    <scope>DEVELOPMENTAL STAGE</scope>
    <scope>TISSUE SPECIFICITY</scope>
    <source>
        <strain>cv. Landsberg erecta</strain>
    </source>
</reference>
<reference key="2">
    <citation type="journal article" date="2000" name="Nature">
        <title>Sequence and analysis of chromosome 1 of the plant Arabidopsis thaliana.</title>
        <authorList>
            <person name="Theologis A."/>
            <person name="Ecker J.R."/>
            <person name="Palm C.J."/>
            <person name="Federspiel N.A."/>
            <person name="Kaul S."/>
            <person name="White O."/>
            <person name="Alonso J."/>
            <person name="Altafi H."/>
            <person name="Araujo R."/>
            <person name="Bowman C.L."/>
            <person name="Brooks S.Y."/>
            <person name="Buehler E."/>
            <person name="Chan A."/>
            <person name="Chao Q."/>
            <person name="Chen H."/>
            <person name="Cheuk R.F."/>
            <person name="Chin C.W."/>
            <person name="Chung M.K."/>
            <person name="Conn L."/>
            <person name="Conway A.B."/>
            <person name="Conway A.R."/>
            <person name="Creasy T.H."/>
            <person name="Dewar K."/>
            <person name="Dunn P."/>
            <person name="Etgu P."/>
            <person name="Feldblyum T.V."/>
            <person name="Feng J.-D."/>
            <person name="Fong B."/>
            <person name="Fujii C.Y."/>
            <person name="Gill J.E."/>
            <person name="Goldsmith A.D."/>
            <person name="Haas B."/>
            <person name="Hansen N.F."/>
            <person name="Hughes B."/>
            <person name="Huizar L."/>
            <person name="Hunter J.L."/>
            <person name="Jenkins J."/>
            <person name="Johnson-Hopson C."/>
            <person name="Khan S."/>
            <person name="Khaykin E."/>
            <person name="Kim C.J."/>
            <person name="Koo H.L."/>
            <person name="Kremenetskaia I."/>
            <person name="Kurtz D.B."/>
            <person name="Kwan A."/>
            <person name="Lam B."/>
            <person name="Langin-Hooper S."/>
            <person name="Lee A."/>
            <person name="Lee J.M."/>
            <person name="Lenz C.A."/>
            <person name="Li J.H."/>
            <person name="Li Y.-P."/>
            <person name="Lin X."/>
            <person name="Liu S.X."/>
            <person name="Liu Z.A."/>
            <person name="Luros J.S."/>
            <person name="Maiti R."/>
            <person name="Marziali A."/>
            <person name="Militscher J."/>
            <person name="Miranda M."/>
            <person name="Nguyen M."/>
            <person name="Nierman W.C."/>
            <person name="Osborne B.I."/>
            <person name="Pai G."/>
            <person name="Peterson J."/>
            <person name="Pham P.K."/>
            <person name="Rizzo M."/>
            <person name="Rooney T."/>
            <person name="Rowley D."/>
            <person name="Sakano H."/>
            <person name="Salzberg S.L."/>
            <person name="Schwartz J.R."/>
            <person name="Shinn P."/>
            <person name="Southwick A.M."/>
            <person name="Sun H."/>
            <person name="Tallon L.J."/>
            <person name="Tambunga G."/>
            <person name="Toriumi M.J."/>
            <person name="Town C.D."/>
            <person name="Utterback T."/>
            <person name="Van Aken S."/>
            <person name="Vaysberg M."/>
            <person name="Vysotskaia V.S."/>
            <person name="Walker M."/>
            <person name="Wu D."/>
            <person name="Yu G."/>
            <person name="Fraser C.M."/>
            <person name="Venter J.C."/>
            <person name="Davis R.W."/>
        </authorList>
    </citation>
    <scope>NUCLEOTIDE SEQUENCE [LARGE SCALE GENOMIC DNA]</scope>
    <source>
        <strain>cv. Columbia</strain>
    </source>
</reference>
<reference key="3">
    <citation type="journal article" date="2017" name="Plant J.">
        <title>Araport11: a complete reannotation of the Arabidopsis thaliana reference genome.</title>
        <authorList>
            <person name="Cheng C.Y."/>
            <person name="Krishnakumar V."/>
            <person name="Chan A.P."/>
            <person name="Thibaud-Nissen F."/>
            <person name="Schobel S."/>
            <person name="Town C.D."/>
        </authorList>
    </citation>
    <scope>GENOME REANNOTATION</scope>
    <source>
        <strain>cv. Columbia</strain>
    </source>
</reference>
<reference key="4">
    <citation type="journal article" date="2000" name="Curr. Opin. Plant Biol.">
        <title>The YABBY gene family and abaxial cell fate.</title>
        <authorList>
            <person name="Bowman J.L."/>
        </authorList>
    </citation>
    <scope>GENE FAMILY</scope>
    <scope>NOMENCLATURE</scope>
</reference>
<reference key="5">
    <citation type="journal article" date="2014" name="J. Genet. Genomics">
        <title>SPOROCYTELESS is a novel embryophyte-specific transcription repressor that interacts with TPL and TCP proteins in Arabidopsis.</title>
        <authorList>
            <person name="Chen G.H."/>
            <person name="Sun J.Y."/>
            <person name="Liu M."/>
            <person name="Liu J."/>
            <person name="Yang W.C."/>
        </authorList>
    </citation>
    <scope>INTERACTION WITH SPL/NZZ AND SPEAR2</scope>
</reference>
<comment type="function">
    <text evidence="1">Involved in the abaxial cell fate determination during embryogenesis and organogenesis.</text>
</comment>
<comment type="subunit">
    <text>Interacts with SPL/NZZ and SPEAR2 (PubMed:25527103).</text>
</comment>
<comment type="subcellular location">
    <subcellularLocation>
        <location evidence="1">Nucleus</location>
    </subcellularLocation>
</comment>
<comment type="tissue specificity">
    <text evidence="4">Expressed at low levels in abaxial regions of lateral aerial organ primordia leading to cotyledons, leaves, flower meristems, sepals, petals, stamen and carpels, but not in roots.</text>
</comment>
<comment type="developmental stage">
    <text evidence="4">Expressed in subepidermal cells of anlagen regions, then in abaxial part of primordia and finally in differentiating organs. Levels decrease in differentiated organs. In embryo, expressed from the heart stage in the abaxial domain of the cotyledon primordia and decrease as the embryo matures. In stamen, expression restricted to the abaxial region differentiating into the connective. In gynoecium, expressed in the abaxial cell layers differentiating into the valves.</text>
</comment>
<comment type="similarity">
    <text evidence="5">Belongs to the YABBY family.</text>
</comment>
<comment type="sequence caution" evidence="5">
    <conflict type="erroneous gene model prediction">
        <sequence resource="EMBL-CDS" id="AAF22893"/>
    </conflict>
</comment>
<evidence type="ECO:0000250" key="1"/>
<evidence type="ECO:0000255" key="2"/>
<evidence type="ECO:0000256" key="3">
    <source>
        <dbReference type="SAM" id="MobiDB-lite"/>
    </source>
</evidence>
<evidence type="ECO:0000269" key="4">
    <source>
    </source>
</evidence>
<evidence type="ECO:0000305" key="5"/>
<protein>
    <recommendedName>
        <fullName>Putative axial regulator YABBY 2</fullName>
    </recommendedName>
</protein>
<sequence length="184" mass="20701">MSVDFSSERVCYVHCSFCTTILAVSVPYASLFTLVTVRCGHCTNLLSLNIGVSLHQTSAPPIHQDLQPHRQHTTSLVTRKDCASSSRSTNNLSENIDREAPRMPPIRPPEKRQRVPSAYNRFIKEEIQRIKACNPEISHREAFSTAAKNWAHFPHIHFGLKLDGNKKGKQLDQSVAGQKSNGYY</sequence>
<organism>
    <name type="scientific">Arabidopsis thaliana</name>
    <name type="common">Mouse-ear cress</name>
    <dbReference type="NCBI Taxonomy" id="3702"/>
    <lineage>
        <taxon>Eukaryota</taxon>
        <taxon>Viridiplantae</taxon>
        <taxon>Streptophyta</taxon>
        <taxon>Embryophyta</taxon>
        <taxon>Tracheophyta</taxon>
        <taxon>Spermatophyta</taxon>
        <taxon>Magnoliopsida</taxon>
        <taxon>eudicotyledons</taxon>
        <taxon>Gunneridae</taxon>
        <taxon>Pentapetalae</taxon>
        <taxon>rosids</taxon>
        <taxon>malvids</taxon>
        <taxon>Brassicales</taxon>
        <taxon>Brassicaceae</taxon>
        <taxon>Camelineae</taxon>
        <taxon>Arabidopsis</taxon>
    </lineage>
</organism>
<keyword id="KW-0217">Developmental protein</keyword>
<keyword id="KW-0238">DNA-binding</keyword>
<keyword id="KW-0479">Metal-binding</keyword>
<keyword id="KW-0539">Nucleus</keyword>
<keyword id="KW-1185">Reference proteome</keyword>
<keyword id="KW-0862">Zinc</keyword>
<keyword id="KW-0863">Zinc-finger</keyword>
<feature type="chain" id="PRO_0000133718" description="Putative axial regulator YABBY 2">
    <location>
        <begin position="1"/>
        <end position="184"/>
    </location>
</feature>
<feature type="zinc finger region" description="C4-type" evidence="2">
    <location>
        <begin position="15"/>
        <end position="42"/>
    </location>
</feature>
<feature type="region of interest" description="Disordered" evidence="3">
    <location>
        <begin position="76"/>
        <end position="115"/>
    </location>
</feature>
<feature type="region of interest" description="Disordered" evidence="3">
    <location>
        <begin position="162"/>
        <end position="184"/>
    </location>
</feature>
<feature type="compositionally biased region" description="Polar residues" evidence="3">
    <location>
        <begin position="76"/>
        <end position="94"/>
    </location>
</feature>
<feature type="compositionally biased region" description="Polar residues" evidence="3">
    <location>
        <begin position="171"/>
        <end position="184"/>
    </location>
</feature>
<accession>Q9XFB0</accession>
<accession>Q9SJE5</accession>
<proteinExistence type="evidence at protein level"/>
<gene>
    <name type="primary">YAB2</name>
    <name type="ordered locus">At1g08465</name>
    <name type="ORF">T27G7.15</name>
</gene>